<sequence length="126" mass="14318">MQNLNNKQKTLIIFLGIITFGIFIIYFFTKAKKVSQIRNTHLIVSSNIPFSLNDFYNCIGSKNNLVNVDATINTLKIELKEINALNNEKLKVLGAKGIMCNQTKISIIFGDFCLELKELIKKDLFS</sequence>
<dbReference type="EC" id="2.7.1.-"/>
<dbReference type="EMBL" id="AF222894">
    <property type="protein sequence ID" value="AAF30585.1"/>
    <property type="molecule type" value="Genomic_DNA"/>
</dbReference>
<dbReference type="RefSeq" id="WP_006688859.1">
    <property type="nucleotide sequence ID" value="NC_002162.1"/>
</dbReference>
<dbReference type="SMR" id="Q9PQW5"/>
<dbReference type="STRING" id="273119.UU178"/>
<dbReference type="EnsemblBacteria" id="AAF30585">
    <property type="protein sequence ID" value="AAF30585"/>
    <property type="gene ID" value="UU178"/>
</dbReference>
<dbReference type="GeneID" id="29672183"/>
<dbReference type="KEGG" id="uur:UU178"/>
<dbReference type="eggNOG" id="COG1264">
    <property type="taxonomic scope" value="Bacteria"/>
</dbReference>
<dbReference type="HOGENOM" id="CLU_162090_0_0_14"/>
<dbReference type="OrthoDB" id="9938384at2"/>
<dbReference type="Proteomes" id="UP000000423">
    <property type="component" value="Chromosome"/>
</dbReference>
<dbReference type="GO" id="GO:0016020">
    <property type="term" value="C:membrane"/>
    <property type="evidence" value="ECO:0007669"/>
    <property type="project" value="UniProtKB-SubCell"/>
</dbReference>
<dbReference type="GO" id="GO:0008982">
    <property type="term" value="F:protein-N(PI)-phosphohistidine-sugar phosphotransferase activity"/>
    <property type="evidence" value="ECO:0007669"/>
    <property type="project" value="InterPro"/>
</dbReference>
<dbReference type="GO" id="GO:0009401">
    <property type="term" value="P:phosphoenolpyruvate-dependent sugar phosphotransferase system"/>
    <property type="evidence" value="ECO:0007669"/>
    <property type="project" value="UniProtKB-KW"/>
</dbReference>
<dbReference type="Gene3D" id="3.30.1360.60">
    <property type="entry name" value="Glucose permease domain IIB"/>
    <property type="match status" value="1"/>
</dbReference>
<dbReference type="InterPro" id="IPR036878">
    <property type="entry name" value="Glu_permease_IIB"/>
</dbReference>
<dbReference type="InterPro" id="IPR001996">
    <property type="entry name" value="PTS_IIB_1"/>
</dbReference>
<dbReference type="SUPFAM" id="SSF55604">
    <property type="entry name" value="Glucose permease domain IIB"/>
    <property type="match status" value="1"/>
</dbReference>
<dbReference type="PROSITE" id="PS51098">
    <property type="entry name" value="PTS_EIIB_TYPE_1"/>
    <property type="match status" value="1"/>
</dbReference>
<accession>Q9PQW5</accession>
<organism>
    <name type="scientific">Ureaplasma parvum serovar 3 (strain ATCC 700970)</name>
    <dbReference type="NCBI Taxonomy" id="273119"/>
    <lineage>
        <taxon>Bacteria</taxon>
        <taxon>Bacillati</taxon>
        <taxon>Mycoplasmatota</taxon>
        <taxon>Mycoplasmoidales</taxon>
        <taxon>Mycoplasmoidaceae</taxon>
        <taxon>Ureaplasma</taxon>
    </lineage>
</organism>
<comment type="function">
    <text evidence="1">The phosphoenolpyruvate-dependent sugar phosphotransferase system (PTS), a major carbohydrate active -transport system, catalyzes the phosphorylation of incoming sugar substrates concomitant with their translocation across the cell membrane.</text>
</comment>
<comment type="subcellular location">
    <subcellularLocation>
        <location evidence="4">Membrane</location>
        <topology evidence="4">Single-pass membrane protein</topology>
    </subcellularLocation>
</comment>
<comment type="domain">
    <text>The EIIB domain is phosphorylated by phospho-EIIA on a cysteinyl or histidyl residue, depending on the transported sugar. Then, it transfers the phosphoryl group to the sugar substrate concomitantly with the sugar uptake processed by the EIIC domain.</text>
</comment>
<comment type="similarity">
    <text evidence="4">To M.genitalium MG129 and M.pneumoniae MPN268.</text>
</comment>
<keyword id="KW-0472">Membrane</keyword>
<keyword id="KW-0597">Phosphoprotein</keyword>
<keyword id="KW-0598">Phosphotransferase system</keyword>
<keyword id="KW-1185">Reference proteome</keyword>
<keyword id="KW-0808">Transferase</keyword>
<keyword id="KW-0812">Transmembrane</keyword>
<keyword id="KW-1133">Transmembrane helix</keyword>
<feature type="chain" id="PRO_0000210431" description="Putative phosphotransferase enzyme IIB component UU178">
    <location>
        <begin position="1"/>
        <end position="126"/>
    </location>
</feature>
<feature type="transmembrane region" description="Helical" evidence="2">
    <location>
        <begin position="11"/>
        <end position="31"/>
    </location>
</feature>
<feature type="domain" description="PTS EIIB type-1" evidence="3">
    <location>
        <begin position="49"/>
        <end position="126"/>
    </location>
</feature>
<protein>
    <recommendedName>
        <fullName>Putative phosphotransferase enzyme IIB component UU178</fullName>
        <ecNumber>2.7.1.-</ecNumber>
    </recommendedName>
    <alternativeName>
        <fullName>Putative PTS system EIIB component</fullName>
    </alternativeName>
</protein>
<proteinExistence type="inferred from homology"/>
<gene>
    <name type="ordered locus">UU178</name>
</gene>
<name>Y178_UREPA</name>
<evidence type="ECO:0000250" key="1"/>
<evidence type="ECO:0000255" key="2"/>
<evidence type="ECO:0000255" key="3">
    <source>
        <dbReference type="PROSITE-ProRule" id="PRU00421"/>
    </source>
</evidence>
<evidence type="ECO:0000305" key="4"/>
<reference key="1">
    <citation type="journal article" date="2000" name="Nature">
        <title>The complete sequence of the mucosal pathogen Ureaplasma urealyticum.</title>
        <authorList>
            <person name="Glass J.I."/>
            <person name="Lefkowitz E.J."/>
            <person name="Glass J.S."/>
            <person name="Heiner C.R."/>
            <person name="Chen E.Y."/>
            <person name="Cassell G.H."/>
        </authorList>
    </citation>
    <scope>NUCLEOTIDE SEQUENCE [LARGE SCALE GENOMIC DNA]</scope>
    <source>
        <strain>ATCC 700970</strain>
    </source>
</reference>